<name>ESR21_CARAU</name>
<reference key="1">
    <citation type="journal article" date="1999" name="Gen. Comp. Endocrinol.">
        <title>Molecular cloning of an estrogen receptor beta subtype from the goldfish, Carassius auratus.</title>
        <authorList>
            <person name="Tchoudakova A.V."/>
            <person name="Pathak S."/>
            <person name="Callard G.V."/>
        </authorList>
    </citation>
    <scope>NUCLEOTIDE SEQUENCE [MRNA]</scope>
    <source>
        <tissue>Liver</tissue>
    </source>
</reference>
<organism>
    <name type="scientific">Carassius auratus</name>
    <name type="common">Goldfish</name>
    <dbReference type="NCBI Taxonomy" id="7957"/>
    <lineage>
        <taxon>Eukaryota</taxon>
        <taxon>Metazoa</taxon>
        <taxon>Chordata</taxon>
        <taxon>Craniata</taxon>
        <taxon>Vertebrata</taxon>
        <taxon>Euteleostomi</taxon>
        <taxon>Actinopterygii</taxon>
        <taxon>Neopterygii</taxon>
        <taxon>Teleostei</taxon>
        <taxon>Ostariophysi</taxon>
        <taxon>Cypriniformes</taxon>
        <taxon>Cyprinidae</taxon>
        <taxon>Cyprininae</taxon>
        <taxon>Carassius</taxon>
    </lineage>
</organism>
<keyword id="KW-0238">DNA-binding</keyword>
<keyword id="KW-0446">Lipid-binding</keyword>
<keyword id="KW-0479">Metal-binding</keyword>
<keyword id="KW-0539">Nucleus</keyword>
<keyword id="KW-0675">Receptor</keyword>
<keyword id="KW-1185">Reference proteome</keyword>
<keyword id="KW-0754">Steroid-binding</keyword>
<keyword id="KW-0804">Transcription</keyword>
<keyword id="KW-0805">Transcription regulation</keyword>
<keyword id="KW-0862">Zinc</keyword>
<keyword id="KW-0863">Zinc-finger</keyword>
<evidence type="ECO:0000250" key="1"/>
<evidence type="ECO:0000255" key="2">
    <source>
        <dbReference type="PROSITE-ProRule" id="PRU00407"/>
    </source>
</evidence>
<evidence type="ECO:0000255" key="3">
    <source>
        <dbReference type="PROSITE-ProRule" id="PRU01189"/>
    </source>
</evidence>
<evidence type="ECO:0000305" key="4"/>
<sequence length="568" mass="63540">MTALNSYAFAMSEYAEGDSSLLQLQEVDSSRMGGHVLSPTFNSSSPSLPVESHPICIPSPYTDLGHDFTTLPFYSPSLLGYGTSPLSDCPSVRQSLSPTLFWPPHSHVSSLALHQQQTRLQPNHPTGGTWAELTPHDHGEEENCKPLSKRVAVAEETSTSLRGKADMHYCAVCSDYASGYHYGVWSCEGCKAFFKRSIQGHNDYICPATNQCTIDKNRRKSCQACRLRKCYEVGMMKCGLRRDRSSYQQRGAQQNRLTRFSGRMRTSGPRSQEIKTVQRPLSGNKVVTMALSPEELIARIMDAEPPEIYLMKDVKKPFTEANVMMSLTNLADKELVHMISWAKKIPGFVEIGLFDQVHLLECCWLEVLMLGLMWRSVNHPGKLVFSPDLSLSRDEGSCVQGFAEIFDMLLAATSRFRELKLQREEYACLKAMILLNSNMCLSSAEGGEELQSRSKLLCLLDSVTDALVWAISKTGLSFQQRSTRLAHLLMLLSHIRHVSNKGMDHLHSMKMKKMVPLYDLLLEMLDAHIMHGSRLSHSGPQADPVPKESNCVQETFTCTSQHGGTLRP</sequence>
<protein>
    <recommendedName>
        <fullName>Estrogen receptor beta-1</fullName>
        <shortName>ER-beta-1</shortName>
    </recommendedName>
    <alternativeName>
        <fullName>Nuclear receptor subfamily 3 group A member 2-A</fullName>
    </alternativeName>
</protein>
<gene>
    <name type="primary">esr2a</name>
    <name type="synonym">nr3a2a</name>
</gene>
<dbReference type="EMBL" id="AF061269">
    <property type="protein sequence ID" value="AAD26921.1"/>
    <property type="molecule type" value="mRNA"/>
</dbReference>
<dbReference type="SMR" id="Q9W669"/>
<dbReference type="Proteomes" id="UP000515129">
    <property type="component" value="Unplaced"/>
</dbReference>
<dbReference type="GO" id="GO:0005634">
    <property type="term" value="C:nucleus"/>
    <property type="evidence" value="ECO:0007669"/>
    <property type="project" value="UniProtKB-SubCell"/>
</dbReference>
<dbReference type="GO" id="GO:0042562">
    <property type="term" value="F:hormone binding"/>
    <property type="evidence" value="ECO:0007669"/>
    <property type="project" value="UniProtKB-ARBA"/>
</dbReference>
<dbReference type="GO" id="GO:0030284">
    <property type="term" value="F:nuclear estrogen receptor activity"/>
    <property type="evidence" value="ECO:0007669"/>
    <property type="project" value="InterPro"/>
</dbReference>
<dbReference type="GO" id="GO:0043565">
    <property type="term" value="F:sequence-specific DNA binding"/>
    <property type="evidence" value="ECO:0007669"/>
    <property type="project" value="InterPro"/>
</dbReference>
<dbReference type="GO" id="GO:0005496">
    <property type="term" value="F:steroid binding"/>
    <property type="evidence" value="ECO:0000250"/>
    <property type="project" value="UniProtKB"/>
</dbReference>
<dbReference type="GO" id="GO:0008270">
    <property type="term" value="F:zinc ion binding"/>
    <property type="evidence" value="ECO:0007669"/>
    <property type="project" value="UniProtKB-KW"/>
</dbReference>
<dbReference type="GO" id="GO:0071392">
    <property type="term" value="P:cellular response to estradiol stimulus"/>
    <property type="evidence" value="ECO:0007669"/>
    <property type="project" value="InterPro"/>
</dbReference>
<dbReference type="GO" id="GO:0030520">
    <property type="term" value="P:estrogen receptor signaling pathway"/>
    <property type="evidence" value="ECO:0007669"/>
    <property type="project" value="InterPro"/>
</dbReference>
<dbReference type="CDD" id="cd07171">
    <property type="entry name" value="NR_DBD_ER"/>
    <property type="match status" value="1"/>
</dbReference>
<dbReference type="CDD" id="cd06949">
    <property type="entry name" value="NR_LBD_ER"/>
    <property type="match status" value="1"/>
</dbReference>
<dbReference type="FunFam" id="1.10.565.10:FF:000010">
    <property type="entry name" value="Estrogen receptor"/>
    <property type="match status" value="1"/>
</dbReference>
<dbReference type="FunFam" id="3.30.50.10:FF:000014">
    <property type="entry name" value="Estrogen receptor beta"/>
    <property type="match status" value="1"/>
</dbReference>
<dbReference type="Gene3D" id="3.30.50.10">
    <property type="entry name" value="Erythroid Transcription Factor GATA-1, subunit A"/>
    <property type="match status" value="1"/>
</dbReference>
<dbReference type="Gene3D" id="1.10.565.10">
    <property type="entry name" value="Retinoid X Receptor"/>
    <property type="match status" value="1"/>
</dbReference>
<dbReference type="InterPro" id="IPR021064">
    <property type="entry name" value="ER-beta-like_N"/>
</dbReference>
<dbReference type="InterPro" id="IPR028355">
    <property type="entry name" value="ER-beta/gamma"/>
</dbReference>
<dbReference type="InterPro" id="IPR024178">
    <property type="entry name" value="Est_rcpt/est-rel_rcp"/>
</dbReference>
<dbReference type="InterPro" id="IPR035500">
    <property type="entry name" value="NHR-like_dom_sf"/>
</dbReference>
<dbReference type="InterPro" id="IPR000536">
    <property type="entry name" value="Nucl_hrmn_rcpt_lig-bd"/>
</dbReference>
<dbReference type="InterPro" id="IPR050200">
    <property type="entry name" value="Nuclear_hormone_rcpt_NR3"/>
</dbReference>
<dbReference type="InterPro" id="IPR001723">
    <property type="entry name" value="Nuclear_hrmn_rcpt"/>
</dbReference>
<dbReference type="InterPro" id="IPR001628">
    <property type="entry name" value="Znf_hrmn_rcpt"/>
</dbReference>
<dbReference type="InterPro" id="IPR013088">
    <property type="entry name" value="Znf_NHR/GATA"/>
</dbReference>
<dbReference type="PANTHER" id="PTHR48092">
    <property type="entry name" value="KNIRPS-RELATED PROTEIN-RELATED"/>
    <property type="match status" value="1"/>
</dbReference>
<dbReference type="Pfam" id="PF12497">
    <property type="entry name" value="ERbeta_N"/>
    <property type="match status" value="1"/>
</dbReference>
<dbReference type="Pfam" id="PF00104">
    <property type="entry name" value="Hormone_recep"/>
    <property type="match status" value="1"/>
</dbReference>
<dbReference type="Pfam" id="PF00105">
    <property type="entry name" value="zf-C4"/>
    <property type="match status" value="1"/>
</dbReference>
<dbReference type="PIRSF" id="PIRSF500102">
    <property type="entry name" value="ER-b"/>
    <property type="match status" value="1"/>
</dbReference>
<dbReference type="PIRSF" id="PIRSF002527">
    <property type="entry name" value="ER-like_NR"/>
    <property type="match status" value="1"/>
</dbReference>
<dbReference type="PRINTS" id="PR00398">
    <property type="entry name" value="STRDHORMONER"/>
</dbReference>
<dbReference type="PRINTS" id="PR00047">
    <property type="entry name" value="STROIDFINGER"/>
</dbReference>
<dbReference type="SMART" id="SM00430">
    <property type="entry name" value="HOLI"/>
    <property type="match status" value="1"/>
</dbReference>
<dbReference type="SMART" id="SM00399">
    <property type="entry name" value="ZnF_C4"/>
    <property type="match status" value="1"/>
</dbReference>
<dbReference type="SUPFAM" id="SSF57716">
    <property type="entry name" value="Glucocorticoid receptor-like (DNA-binding domain)"/>
    <property type="match status" value="1"/>
</dbReference>
<dbReference type="SUPFAM" id="SSF48508">
    <property type="entry name" value="Nuclear receptor ligand-binding domain"/>
    <property type="match status" value="1"/>
</dbReference>
<dbReference type="PROSITE" id="PS51843">
    <property type="entry name" value="NR_LBD"/>
    <property type="match status" value="1"/>
</dbReference>
<dbReference type="PROSITE" id="PS00031">
    <property type="entry name" value="NUCLEAR_REC_DBD_1"/>
    <property type="match status" value="1"/>
</dbReference>
<dbReference type="PROSITE" id="PS51030">
    <property type="entry name" value="NUCLEAR_REC_DBD_2"/>
    <property type="match status" value="1"/>
</dbReference>
<proteinExistence type="evidence at transcript level"/>
<feature type="chain" id="PRO_0000053652" description="Estrogen receptor beta-1">
    <location>
        <begin position="1"/>
        <end position="568"/>
    </location>
</feature>
<feature type="domain" description="NR LBD" evidence="3">
    <location>
        <begin position="292"/>
        <end position="528"/>
    </location>
</feature>
<feature type="DNA-binding region" description="Nuclear receptor" evidence="2">
    <location>
        <begin position="170"/>
        <end position="235"/>
    </location>
</feature>
<feature type="zinc finger region" description="NR C4-type" evidence="2">
    <location>
        <begin position="170"/>
        <end position="190"/>
    </location>
</feature>
<feature type="zinc finger region" description="NR C4-type" evidence="2">
    <location>
        <begin position="206"/>
        <end position="230"/>
    </location>
</feature>
<feature type="region of interest" description="Modulating">
    <location>
        <begin position="12"/>
        <end position="169"/>
    </location>
</feature>
<accession>Q9W669</accession>
<comment type="function">
    <text>Binds estrogens with an affinity similar to that of ER-alpha, and activates expression of reporter genes containing estrogen response elements (ERE) in an estrogen-dependent manner.</text>
</comment>
<comment type="subunit">
    <text evidence="1">Binds DNA as a homodimer. Can form a heterodimer with ER-alpha (By similarity).</text>
</comment>
<comment type="subcellular location">
    <subcellularLocation>
        <location>Nucleus</location>
    </subcellularLocation>
</comment>
<comment type="domain">
    <text>Composed of three domains: a modulating N-terminal domain, a DNA-binding domain and a C-terminal ligand-binding domain.</text>
</comment>
<comment type="similarity">
    <text evidence="4">Belongs to the nuclear hormone receptor family. NR3 subfamily.</text>
</comment>